<comment type="alternative products">
    <event type="alternative splicing"/>
    <isoform>
        <id>Q9SAG4-1</id>
        <name>1</name>
        <sequence type="displayed"/>
    </isoform>
    <text>A number of isoforms are produced. According to EST sequences.</text>
</comment>
<comment type="sequence caution" evidence="2">
    <conflict type="erroneous gene model prediction">
        <sequence resource="EMBL-CDS" id="AAF14684"/>
    </conflict>
</comment>
<name>FB93_ARATH</name>
<sequence>MERSSSSSSSSCDKVWNLGLPYPTFTLANDDKPYLITVSDDHSVKVKNVDWISKLPDDVLLIILSRLSTEEAIRTSVVSKRWEHVWNQMSHLVFDMRKNIINSNNTLDGSNPVATLITQVINNHRGHLESCVIIHVPYQGGNGMLNSWIRLLSCVKRTKVLTLRYHYGTWDRKFKTFNFSPDSLSHPSLMSLSLHSYFLESSHPLRNCSNLRTLKLLSIVAPEIGVFNRVLASCPCLEVLVLGICCFKKSRVPLKIENKKLKLLQVSSLERIDAIEVSTTSLDILAIIDICCRRDDLSLQSPQLQFNRNFWVLGPYVPHISYNISEEKSIGNEEFVNTIYGELLRPFANLYVALSVSVDLMNPTEVERLRQVLGLWTRKILELEIIFKDNNGPREENKSWDKKLWEDNNKKDPFPNAKFRVDTVWMYNFSGSEEEFALMTCLIRQGTVVEKMMIKTSTFPARKRLKIEAAVAKLQALQTKLTIKCF</sequence>
<gene>
    <name type="ordered locus">At1g80960</name>
    <name type="ORF">F23A5.32</name>
</gene>
<evidence type="ECO:0000255" key="1">
    <source>
        <dbReference type="PROSITE-ProRule" id="PRU00080"/>
    </source>
</evidence>
<evidence type="ECO:0000305" key="2"/>
<feature type="chain" id="PRO_0000283366" description="F-box protein At1g80960">
    <location>
        <begin position="1"/>
        <end position="486"/>
    </location>
</feature>
<feature type="domain" description="F-box" evidence="1">
    <location>
        <begin position="49"/>
        <end position="97"/>
    </location>
</feature>
<accession>Q9SAG4</accession>
<accession>A4VCM7</accession>
<accession>Q3EC95</accession>
<organism>
    <name type="scientific">Arabidopsis thaliana</name>
    <name type="common">Mouse-ear cress</name>
    <dbReference type="NCBI Taxonomy" id="3702"/>
    <lineage>
        <taxon>Eukaryota</taxon>
        <taxon>Viridiplantae</taxon>
        <taxon>Streptophyta</taxon>
        <taxon>Embryophyta</taxon>
        <taxon>Tracheophyta</taxon>
        <taxon>Spermatophyta</taxon>
        <taxon>Magnoliopsida</taxon>
        <taxon>eudicotyledons</taxon>
        <taxon>Gunneridae</taxon>
        <taxon>Pentapetalae</taxon>
        <taxon>rosids</taxon>
        <taxon>malvids</taxon>
        <taxon>Brassicales</taxon>
        <taxon>Brassicaceae</taxon>
        <taxon>Camelineae</taxon>
        <taxon>Arabidopsis</taxon>
    </lineage>
</organism>
<dbReference type="EMBL" id="AC011713">
    <property type="protein sequence ID" value="AAF14684.1"/>
    <property type="status" value="ALT_SEQ"/>
    <property type="molecule type" value="Genomic_DNA"/>
</dbReference>
<dbReference type="EMBL" id="CP002684">
    <property type="protein sequence ID" value="AEE36472.1"/>
    <property type="molecule type" value="Genomic_DNA"/>
</dbReference>
<dbReference type="EMBL" id="CP002684">
    <property type="protein sequence ID" value="AEE36473.1"/>
    <property type="molecule type" value="Genomic_DNA"/>
</dbReference>
<dbReference type="EMBL" id="CP002684">
    <property type="protein sequence ID" value="ANM60812.1"/>
    <property type="molecule type" value="Genomic_DNA"/>
</dbReference>
<dbReference type="EMBL" id="BT030468">
    <property type="protein sequence ID" value="ABP88122.1"/>
    <property type="molecule type" value="mRNA"/>
</dbReference>
<dbReference type="PIR" id="F96842">
    <property type="entry name" value="F96842"/>
</dbReference>
<dbReference type="RefSeq" id="NP_001319434.1">
    <molecule id="Q9SAG4-1"/>
    <property type="nucleotide sequence ID" value="NM_001335024.1"/>
</dbReference>
<dbReference type="RefSeq" id="NP_178211.3">
    <molecule id="Q9SAG4-1"/>
    <property type="nucleotide sequence ID" value="NM_106744.4"/>
</dbReference>
<dbReference type="RefSeq" id="NP_974194.1">
    <molecule id="Q9SAG4-1"/>
    <property type="nucleotide sequence ID" value="NM_202465.2"/>
</dbReference>
<dbReference type="FunCoup" id="Q9SAG4">
    <property type="interactions" value="65"/>
</dbReference>
<dbReference type="STRING" id="3702.Q9SAG4"/>
<dbReference type="PaxDb" id="3702-AT1G80960.2"/>
<dbReference type="EnsemblPlants" id="AT1G80960.1">
    <molecule id="Q9SAG4-1"/>
    <property type="protein sequence ID" value="AT1G80960.1"/>
    <property type="gene ID" value="AT1G80960"/>
</dbReference>
<dbReference type="EnsemblPlants" id="AT1G80960.2">
    <molecule id="Q9SAG4-1"/>
    <property type="protein sequence ID" value="AT1G80960.2"/>
    <property type="gene ID" value="AT1G80960"/>
</dbReference>
<dbReference type="EnsemblPlants" id="AT1G80960.4">
    <molecule id="Q9SAG4-1"/>
    <property type="protein sequence ID" value="AT1G80960.4"/>
    <property type="gene ID" value="AT1G80960"/>
</dbReference>
<dbReference type="GeneID" id="844436"/>
<dbReference type="Gramene" id="AT1G80960.1">
    <molecule id="Q9SAG4-1"/>
    <property type="protein sequence ID" value="AT1G80960.1"/>
    <property type="gene ID" value="AT1G80960"/>
</dbReference>
<dbReference type="Gramene" id="AT1G80960.2">
    <molecule id="Q9SAG4-1"/>
    <property type="protein sequence ID" value="AT1G80960.2"/>
    <property type="gene ID" value="AT1G80960"/>
</dbReference>
<dbReference type="Gramene" id="AT1G80960.4">
    <molecule id="Q9SAG4-1"/>
    <property type="protein sequence ID" value="AT1G80960.4"/>
    <property type="gene ID" value="AT1G80960"/>
</dbReference>
<dbReference type="KEGG" id="ath:AT1G80960"/>
<dbReference type="Araport" id="AT1G80960"/>
<dbReference type="TAIR" id="AT1G80960"/>
<dbReference type="eggNOG" id="ENOG502RRI2">
    <property type="taxonomic scope" value="Eukaryota"/>
</dbReference>
<dbReference type="InParanoid" id="Q9SAG4"/>
<dbReference type="OMA" id="LNTWIQS"/>
<dbReference type="PRO" id="PR:Q9SAG4"/>
<dbReference type="Proteomes" id="UP000006548">
    <property type="component" value="Chromosome 1"/>
</dbReference>
<dbReference type="ExpressionAtlas" id="Q9SAG4">
    <property type="expression patterns" value="baseline and differential"/>
</dbReference>
<dbReference type="CDD" id="cd22160">
    <property type="entry name" value="F-box_AtFBL13-like"/>
    <property type="match status" value="1"/>
</dbReference>
<dbReference type="Gene3D" id="1.20.1280.50">
    <property type="match status" value="1"/>
</dbReference>
<dbReference type="InterPro" id="IPR036047">
    <property type="entry name" value="F-box-like_dom_sf"/>
</dbReference>
<dbReference type="InterPro" id="IPR053781">
    <property type="entry name" value="F-box_AtFBL13-like"/>
</dbReference>
<dbReference type="InterPro" id="IPR001810">
    <property type="entry name" value="F-box_dom"/>
</dbReference>
<dbReference type="InterPro" id="IPR044997">
    <property type="entry name" value="F-box_plant"/>
</dbReference>
<dbReference type="PANTHER" id="PTHR32153">
    <property type="entry name" value="OJ000223_09.16 PROTEIN"/>
    <property type="match status" value="1"/>
</dbReference>
<dbReference type="Pfam" id="PF00646">
    <property type="entry name" value="F-box"/>
    <property type="match status" value="1"/>
</dbReference>
<dbReference type="SMART" id="SM00256">
    <property type="entry name" value="FBOX"/>
    <property type="match status" value="1"/>
</dbReference>
<dbReference type="SUPFAM" id="SSF81383">
    <property type="entry name" value="F-box domain"/>
    <property type="match status" value="1"/>
</dbReference>
<dbReference type="SUPFAM" id="SSF52047">
    <property type="entry name" value="RNI-like"/>
    <property type="match status" value="1"/>
</dbReference>
<dbReference type="PROSITE" id="PS50181">
    <property type="entry name" value="FBOX"/>
    <property type="match status" value="1"/>
</dbReference>
<reference key="1">
    <citation type="journal article" date="2000" name="Nature">
        <title>Sequence and analysis of chromosome 1 of the plant Arabidopsis thaliana.</title>
        <authorList>
            <person name="Theologis A."/>
            <person name="Ecker J.R."/>
            <person name="Palm C.J."/>
            <person name="Federspiel N.A."/>
            <person name="Kaul S."/>
            <person name="White O."/>
            <person name="Alonso J."/>
            <person name="Altafi H."/>
            <person name="Araujo R."/>
            <person name="Bowman C.L."/>
            <person name="Brooks S.Y."/>
            <person name="Buehler E."/>
            <person name="Chan A."/>
            <person name="Chao Q."/>
            <person name="Chen H."/>
            <person name="Cheuk R.F."/>
            <person name="Chin C.W."/>
            <person name="Chung M.K."/>
            <person name="Conn L."/>
            <person name="Conway A.B."/>
            <person name="Conway A.R."/>
            <person name="Creasy T.H."/>
            <person name="Dewar K."/>
            <person name="Dunn P."/>
            <person name="Etgu P."/>
            <person name="Feldblyum T.V."/>
            <person name="Feng J.-D."/>
            <person name="Fong B."/>
            <person name="Fujii C.Y."/>
            <person name="Gill J.E."/>
            <person name="Goldsmith A.D."/>
            <person name="Haas B."/>
            <person name="Hansen N.F."/>
            <person name="Hughes B."/>
            <person name="Huizar L."/>
            <person name="Hunter J.L."/>
            <person name="Jenkins J."/>
            <person name="Johnson-Hopson C."/>
            <person name="Khan S."/>
            <person name="Khaykin E."/>
            <person name="Kim C.J."/>
            <person name="Koo H.L."/>
            <person name="Kremenetskaia I."/>
            <person name="Kurtz D.B."/>
            <person name="Kwan A."/>
            <person name="Lam B."/>
            <person name="Langin-Hooper S."/>
            <person name="Lee A."/>
            <person name="Lee J.M."/>
            <person name="Lenz C.A."/>
            <person name="Li J.H."/>
            <person name="Li Y.-P."/>
            <person name="Lin X."/>
            <person name="Liu S.X."/>
            <person name="Liu Z.A."/>
            <person name="Luros J.S."/>
            <person name="Maiti R."/>
            <person name="Marziali A."/>
            <person name="Militscher J."/>
            <person name="Miranda M."/>
            <person name="Nguyen M."/>
            <person name="Nierman W.C."/>
            <person name="Osborne B.I."/>
            <person name="Pai G."/>
            <person name="Peterson J."/>
            <person name="Pham P.K."/>
            <person name="Rizzo M."/>
            <person name="Rooney T."/>
            <person name="Rowley D."/>
            <person name="Sakano H."/>
            <person name="Salzberg S.L."/>
            <person name="Schwartz J.R."/>
            <person name="Shinn P."/>
            <person name="Southwick A.M."/>
            <person name="Sun H."/>
            <person name="Tallon L.J."/>
            <person name="Tambunga G."/>
            <person name="Toriumi M.J."/>
            <person name="Town C.D."/>
            <person name="Utterback T."/>
            <person name="Van Aken S."/>
            <person name="Vaysberg M."/>
            <person name="Vysotskaia V.S."/>
            <person name="Walker M."/>
            <person name="Wu D."/>
            <person name="Yu G."/>
            <person name="Fraser C.M."/>
            <person name="Venter J.C."/>
            <person name="Davis R.W."/>
        </authorList>
    </citation>
    <scope>NUCLEOTIDE SEQUENCE [LARGE SCALE GENOMIC DNA]</scope>
    <source>
        <strain>cv. Columbia</strain>
    </source>
</reference>
<reference key="2">
    <citation type="journal article" date="2017" name="Plant J.">
        <title>Araport11: a complete reannotation of the Arabidopsis thaliana reference genome.</title>
        <authorList>
            <person name="Cheng C.Y."/>
            <person name="Krishnakumar V."/>
            <person name="Chan A.P."/>
            <person name="Thibaud-Nissen F."/>
            <person name="Schobel S."/>
            <person name="Town C.D."/>
        </authorList>
    </citation>
    <scope>GENOME REANNOTATION</scope>
    <source>
        <strain>cv. Columbia</strain>
    </source>
</reference>
<reference key="3">
    <citation type="submission" date="2007-04" db="EMBL/GenBank/DDBJ databases">
        <title>Arabidopsis ORF clones.</title>
        <authorList>
            <person name="Bautista-Mercan V.R."/>
            <person name="Kim C.J."/>
            <person name="Chen H."/>
            <person name="Wu S.Y."/>
            <person name="De Los Reyes C."/>
            <person name="Ecker J.R."/>
        </authorList>
    </citation>
    <scope>NUCLEOTIDE SEQUENCE [LARGE SCALE MRNA]</scope>
    <source>
        <strain>cv. Columbia</strain>
    </source>
</reference>
<proteinExistence type="evidence at transcript level"/>
<keyword id="KW-0025">Alternative splicing</keyword>
<keyword id="KW-1185">Reference proteome</keyword>
<protein>
    <recommendedName>
        <fullName>F-box protein At1g80960</fullName>
    </recommendedName>
</protein>